<organism>
    <name type="scientific">Methanosarcina acetivorans (strain ATCC 35395 / DSM 2834 / JCM 12185 / C2A)</name>
    <dbReference type="NCBI Taxonomy" id="188937"/>
    <lineage>
        <taxon>Archaea</taxon>
        <taxon>Methanobacteriati</taxon>
        <taxon>Methanobacteriota</taxon>
        <taxon>Stenosarchaea group</taxon>
        <taxon>Methanomicrobia</taxon>
        <taxon>Methanosarcinales</taxon>
        <taxon>Methanosarcinaceae</taxon>
        <taxon>Methanosarcina</taxon>
    </lineage>
</organism>
<gene>
    <name evidence="1" type="primary">aroD</name>
    <name type="ordered locus">MA_4593</name>
</gene>
<dbReference type="EC" id="4.2.1.10" evidence="1"/>
<dbReference type="EMBL" id="AE010299">
    <property type="protein sequence ID" value="AAM07932.1"/>
    <property type="molecule type" value="Genomic_DNA"/>
</dbReference>
<dbReference type="RefSeq" id="WP_011024466.1">
    <property type="nucleotide sequence ID" value="NC_003552.1"/>
</dbReference>
<dbReference type="SMR" id="Q8THC4"/>
<dbReference type="FunCoup" id="Q8THC4">
    <property type="interactions" value="78"/>
</dbReference>
<dbReference type="STRING" id="188937.MA_4593"/>
<dbReference type="EnsemblBacteria" id="AAM07932">
    <property type="protein sequence ID" value="AAM07932"/>
    <property type="gene ID" value="MA_4593"/>
</dbReference>
<dbReference type="GeneID" id="1476487"/>
<dbReference type="KEGG" id="mac:MA_4593"/>
<dbReference type="HOGENOM" id="CLU_064444_2_1_2"/>
<dbReference type="InParanoid" id="Q8THC4"/>
<dbReference type="OrthoDB" id="34329at2157"/>
<dbReference type="PhylomeDB" id="Q8THC4"/>
<dbReference type="UniPathway" id="UPA00053">
    <property type="reaction ID" value="UER00086"/>
</dbReference>
<dbReference type="Proteomes" id="UP000002487">
    <property type="component" value="Chromosome"/>
</dbReference>
<dbReference type="GO" id="GO:0003855">
    <property type="term" value="F:3-dehydroquinate dehydratase activity"/>
    <property type="evidence" value="ECO:0000318"/>
    <property type="project" value="GO_Central"/>
</dbReference>
<dbReference type="GO" id="GO:0046279">
    <property type="term" value="P:3,4-dihydroxybenzoate biosynthetic process"/>
    <property type="evidence" value="ECO:0000318"/>
    <property type="project" value="GO_Central"/>
</dbReference>
<dbReference type="GO" id="GO:0008652">
    <property type="term" value="P:amino acid biosynthetic process"/>
    <property type="evidence" value="ECO:0007669"/>
    <property type="project" value="UniProtKB-KW"/>
</dbReference>
<dbReference type="GO" id="GO:0009073">
    <property type="term" value="P:aromatic amino acid family biosynthetic process"/>
    <property type="evidence" value="ECO:0007669"/>
    <property type="project" value="UniProtKB-KW"/>
</dbReference>
<dbReference type="GO" id="GO:0009423">
    <property type="term" value="P:chorismate biosynthetic process"/>
    <property type="evidence" value="ECO:0007669"/>
    <property type="project" value="UniProtKB-UniRule"/>
</dbReference>
<dbReference type="CDD" id="cd00502">
    <property type="entry name" value="DHQase_I"/>
    <property type="match status" value="1"/>
</dbReference>
<dbReference type="FunFam" id="3.20.20.70:FF:000290">
    <property type="entry name" value="3-dehydroquinate dehydratase"/>
    <property type="match status" value="1"/>
</dbReference>
<dbReference type="Gene3D" id="3.20.20.70">
    <property type="entry name" value="Aldolase class I"/>
    <property type="match status" value="1"/>
</dbReference>
<dbReference type="HAMAP" id="MF_00214">
    <property type="entry name" value="AroD"/>
    <property type="match status" value="1"/>
</dbReference>
<dbReference type="InterPro" id="IPR013785">
    <property type="entry name" value="Aldolase_TIM"/>
</dbReference>
<dbReference type="InterPro" id="IPR001381">
    <property type="entry name" value="DHquinase_I"/>
</dbReference>
<dbReference type="InterPro" id="IPR050146">
    <property type="entry name" value="Type-I_3-dehydroquinase"/>
</dbReference>
<dbReference type="NCBIfam" id="TIGR01093">
    <property type="entry name" value="aroD"/>
    <property type="match status" value="1"/>
</dbReference>
<dbReference type="PANTHER" id="PTHR43699">
    <property type="entry name" value="3-DEHYDROQUINATE DEHYDRATASE"/>
    <property type="match status" value="1"/>
</dbReference>
<dbReference type="PANTHER" id="PTHR43699:SF1">
    <property type="entry name" value="3-DEHYDROQUINATE DEHYDRATASE"/>
    <property type="match status" value="1"/>
</dbReference>
<dbReference type="Pfam" id="PF01487">
    <property type="entry name" value="DHquinase_I"/>
    <property type="match status" value="1"/>
</dbReference>
<dbReference type="SUPFAM" id="SSF51569">
    <property type="entry name" value="Aldolase"/>
    <property type="match status" value="1"/>
</dbReference>
<sequence>MTQIGPFDLEKKAAVVAVILEKPLETSKKAAEKGADILEVRLDLLGIRNPESAAKIIREIKSETGLPVLVTNRSVAEGGKWEGKEVDRTELLVALLSLKDGPDAVDIELSASREDRDKVIKAAKAHGKTVIISSHDFSKTPSPQEMTATLAEMFLAEADIAKIAVMPGSMEDVLNLLKVTLEFKNTGKTVCTIAMGKPGKHTRVVAPLYGSVLTYASIESNAVAAPGQLPVDEVKKIMEMLK</sequence>
<comment type="function">
    <text evidence="1">Involved in the third step of the chorismate pathway, which leads to the biosynthesis of aromatic amino acids. Catalyzes the cis-dehydration of 3-dehydroquinate (DHQ) and introduces the first double bond of the aromatic ring to yield 3-dehydroshikimate.</text>
</comment>
<comment type="catalytic activity">
    <reaction evidence="1">
        <text>3-dehydroquinate = 3-dehydroshikimate + H2O</text>
        <dbReference type="Rhea" id="RHEA:21096"/>
        <dbReference type="ChEBI" id="CHEBI:15377"/>
        <dbReference type="ChEBI" id="CHEBI:16630"/>
        <dbReference type="ChEBI" id="CHEBI:32364"/>
        <dbReference type="EC" id="4.2.1.10"/>
    </reaction>
</comment>
<comment type="pathway">
    <text evidence="1">Metabolic intermediate biosynthesis; chorismate biosynthesis; chorismate from D-erythrose 4-phosphate and phosphoenolpyruvate: step 3/7.</text>
</comment>
<comment type="subunit">
    <text evidence="1">Homodimer.</text>
</comment>
<comment type="similarity">
    <text evidence="1">Belongs to the type-I 3-dehydroquinase family.</text>
</comment>
<evidence type="ECO:0000255" key="1">
    <source>
        <dbReference type="HAMAP-Rule" id="MF_00214"/>
    </source>
</evidence>
<accession>Q8THC4</accession>
<feature type="chain" id="PRO_0000138828" description="3-dehydroquinate dehydratase">
    <location>
        <begin position="1"/>
        <end position="242"/>
    </location>
</feature>
<feature type="active site" description="Proton donor/acceptor" evidence="1">
    <location>
        <position position="135"/>
    </location>
</feature>
<feature type="active site" description="Schiff-base intermediate with substrate" evidence="1">
    <location>
        <position position="162"/>
    </location>
</feature>
<feature type="binding site" evidence="1">
    <location>
        <begin position="39"/>
        <end position="41"/>
    </location>
    <ligand>
        <name>3-dehydroquinate</name>
        <dbReference type="ChEBI" id="CHEBI:32364"/>
    </ligand>
</feature>
<feature type="binding site" evidence="1">
    <location>
        <position position="73"/>
    </location>
    <ligand>
        <name>3-dehydroquinate</name>
        <dbReference type="ChEBI" id="CHEBI:32364"/>
    </ligand>
</feature>
<feature type="binding site" evidence="1">
    <location>
        <position position="203"/>
    </location>
    <ligand>
        <name>3-dehydroquinate</name>
        <dbReference type="ChEBI" id="CHEBI:32364"/>
    </ligand>
</feature>
<feature type="binding site" evidence="1">
    <location>
        <position position="228"/>
    </location>
    <ligand>
        <name>3-dehydroquinate</name>
        <dbReference type="ChEBI" id="CHEBI:32364"/>
    </ligand>
</feature>
<reference key="1">
    <citation type="journal article" date="2002" name="Genome Res.">
        <title>The genome of Methanosarcina acetivorans reveals extensive metabolic and physiological diversity.</title>
        <authorList>
            <person name="Galagan J.E."/>
            <person name="Nusbaum C."/>
            <person name="Roy A."/>
            <person name="Endrizzi M.G."/>
            <person name="Macdonald P."/>
            <person name="FitzHugh W."/>
            <person name="Calvo S."/>
            <person name="Engels R."/>
            <person name="Smirnov S."/>
            <person name="Atnoor D."/>
            <person name="Brown A."/>
            <person name="Allen N."/>
            <person name="Naylor J."/>
            <person name="Stange-Thomann N."/>
            <person name="DeArellano K."/>
            <person name="Johnson R."/>
            <person name="Linton L."/>
            <person name="McEwan P."/>
            <person name="McKernan K."/>
            <person name="Talamas J."/>
            <person name="Tirrell A."/>
            <person name="Ye W."/>
            <person name="Zimmer A."/>
            <person name="Barber R.D."/>
            <person name="Cann I."/>
            <person name="Graham D.E."/>
            <person name="Grahame D.A."/>
            <person name="Guss A.M."/>
            <person name="Hedderich R."/>
            <person name="Ingram-Smith C."/>
            <person name="Kuettner H.C."/>
            <person name="Krzycki J.A."/>
            <person name="Leigh J.A."/>
            <person name="Li W."/>
            <person name="Liu J."/>
            <person name="Mukhopadhyay B."/>
            <person name="Reeve J.N."/>
            <person name="Smith K."/>
            <person name="Springer T.A."/>
            <person name="Umayam L.A."/>
            <person name="White O."/>
            <person name="White R.H."/>
            <person name="de Macario E.C."/>
            <person name="Ferry J.G."/>
            <person name="Jarrell K.F."/>
            <person name="Jing H."/>
            <person name="Macario A.J.L."/>
            <person name="Paulsen I.T."/>
            <person name="Pritchett M."/>
            <person name="Sowers K.R."/>
            <person name="Swanson R.V."/>
            <person name="Zinder S.H."/>
            <person name="Lander E."/>
            <person name="Metcalf W.W."/>
            <person name="Birren B."/>
        </authorList>
    </citation>
    <scope>NUCLEOTIDE SEQUENCE [LARGE SCALE GENOMIC DNA]</scope>
    <source>
        <strain>ATCC 35395 / DSM 2834 / JCM 12185 / C2A</strain>
    </source>
</reference>
<keyword id="KW-0028">Amino-acid biosynthesis</keyword>
<keyword id="KW-0057">Aromatic amino acid biosynthesis</keyword>
<keyword id="KW-0456">Lyase</keyword>
<keyword id="KW-1185">Reference proteome</keyword>
<keyword id="KW-0704">Schiff base</keyword>
<protein>
    <recommendedName>
        <fullName evidence="1">3-dehydroquinate dehydratase</fullName>
        <shortName evidence="1">3-dehydroquinase</shortName>
        <ecNumber evidence="1">4.2.1.10</ecNumber>
    </recommendedName>
    <alternativeName>
        <fullName evidence="1">Type I DHQase</fullName>
    </alternativeName>
    <alternativeName>
        <fullName evidence="1">Type I dehydroquinase</fullName>
        <shortName evidence="1">DHQ1</shortName>
    </alternativeName>
</protein>
<name>AROD_METAC</name>
<proteinExistence type="inferred from homology"/>